<reference key="1">
    <citation type="journal article" date="2000" name="Nature">
        <title>Complete genome sequence of Pseudomonas aeruginosa PAO1, an opportunistic pathogen.</title>
        <authorList>
            <person name="Stover C.K."/>
            <person name="Pham X.-Q.T."/>
            <person name="Erwin A.L."/>
            <person name="Mizoguchi S.D."/>
            <person name="Warrener P."/>
            <person name="Hickey M.J."/>
            <person name="Brinkman F.S.L."/>
            <person name="Hufnagle W.O."/>
            <person name="Kowalik D.J."/>
            <person name="Lagrou M."/>
            <person name="Garber R.L."/>
            <person name="Goltry L."/>
            <person name="Tolentino E."/>
            <person name="Westbrock-Wadman S."/>
            <person name="Yuan Y."/>
            <person name="Brody L.L."/>
            <person name="Coulter S.N."/>
            <person name="Folger K.R."/>
            <person name="Kas A."/>
            <person name="Larbig K."/>
            <person name="Lim R.M."/>
            <person name="Smith K.A."/>
            <person name="Spencer D.H."/>
            <person name="Wong G.K.-S."/>
            <person name="Wu Z."/>
            <person name="Paulsen I.T."/>
            <person name="Reizer J."/>
            <person name="Saier M.H. Jr."/>
            <person name="Hancock R.E.W."/>
            <person name="Lory S."/>
            <person name="Olson M.V."/>
        </authorList>
    </citation>
    <scope>NUCLEOTIDE SEQUENCE [LARGE SCALE GENOMIC DNA]</scope>
    <source>
        <strain>ATCC 15692 / DSM 22644 / CIP 104116 / JCM 14847 / LMG 12228 / 1C / PRS 101 / PAO1</strain>
    </source>
</reference>
<sequence>MKFLLIGLIRFYQYAISPLIGPRCRFYPSCSHYTLEAIRVHGALRGGYLGARRLLRCHPWHPGGYDPVPERQEQACACHRTAKPGK</sequence>
<proteinExistence type="inferred from homology"/>
<accession>Q9I270</accession>
<protein>
    <recommendedName>
        <fullName evidence="1">Putative membrane protein insertion efficiency factor</fullName>
    </recommendedName>
</protein>
<feature type="chain" id="PRO_0000171854" description="Putative membrane protein insertion efficiency factor">
    <location>
        <begin position="1"/>
        <end position="86"/>
    </location>
</feature>
<keyword id="KW-0997">Cell inner membrane</keyword>
<keyword id="KW-1003">Cell membrane</keyword>
<keyword id="KW-0472">Membrane</keyword>
<keyword id="KW-1185">Reference proteome</keyword>
<dbReference type="EMBL" id="AE004091">
    <property type="protein sequence ID" value="AAG05433.1"/>
    <property type="molecule type" value="Genomic_DNA"/>
</dbReference>
<dbReference type="PIR" id="D83389">
    <property type="entry name" value="D83389"/>
</dbReference>
<dbReference type="RefSeq" id="NP_250735.1">
    <property type="nucleotide sequence ID" value="NC_002516.2"/>
</dbReference>
<dbReference type="FunCoup" id="Q9I270">
    <property type="interactions" value="349"/>
</dbReference>
<dbReference type="STRING" id="208964.PA2045"/>
<dbReference type="PaxDb" id="208964-PA2045"/>
<dbReference type="DNASU" id="878102"/>
<dbReference type="GeneID" id="878102"/>
<dbReference type="KEGG" id="pae:PA2045"/>
<dbReference type="PATRIC" id="fig|208964.12.peg.2131"/>
<dbReference type="PseudoCAP" id="PA2045"/>
<dbReference type="HOGENOM" id="CLU_144811_6_1_6"/>
<dbReference type="InParanoid" id="Q9I270"/>
<dbReference type="OrthoDB" id="9801753at2"/>
<dbReference type="PhylomeDB" id="Q9I270"/>
<dbReference type="BioCyc" id="PAER208964:G1FZ6-2083-MONOMER"/>
<dbReference type="Proteomes" id="UP000002438">
    <property type="component" value="Chromosome"/>
</dbReference>
<dbReference type="GO" id="GO:0005886">
    <property type="term" value="C:plasma membrane"/>
    <property type="evidence" value="ECO:0007669"/>
    <property type="project" value="UniProtKB-SubCell"/>
</dbReference>
<dbReference type="HAMAP" id="MF_00386">
    <property type="entry name" value="UPF0161_YidD"/>
    <property type="match status" value="1"/>
</dbReference>
<dbReference type="InterPro" id="IPR002696">
    <property type="entry name" value="Membr_insert_effic_factor_YidD"/>
</dbReference>
<dbReference type="NCBIfam" id="TIGR00278">
    <property type="entry name" value="membrane protein insertion efficiency factor YidD"/>
    <property type="match status" value="1"/>
</dbReference>
<dbReference type="PANTHER" id="PTHR33383">
    <property type="entry name" value="MEMBRANE PROTEIN INSERTION EFFICIENCY FACTOR-RELATED"/>
    <property type="match status" value="1"/>
</dbReference>
<dbReference type="PANTHER" id="PTHR33383:SF1">
    <property type="entry name" value="MEMBRANE PROTEIN INSERTION EFFICIENCY FACTOR-RELATED"/>
    <property type="match status" value="1"/>
</dbReference>
<dbReference type="Pfam" id="PF01809">
    <property type="entry name" value="YidD"/>
    <property type="match status" value="1"/>
</dbReference>
<dbReference type="SMART" id="SM01234">
    <property type="entry name" value="Haemolytic"/>
    <property type="match status" value="1"/>
</dbReference>
<evidence type="ECO:0000255" key="1">
    <source>
        <dbReference type="HAMAP-Rule" id="MF_00386"/>
    </source>
</evidence>
<name>YIDD_PSEAE</name>
<gene>
    <name type="ordered locus">PA2045</name>
</gene>
<organism>
    <name type="scientific">Pseudomonas aeruginosa (strain ATCC 15692 / DSM 22644 / CIP 104116 / JCM 14847 / LMG 12228 / 1C / PRS 101 / PAO1)</name>
    <dbReference type="NCBI Taxonomy" id="208964"/>
    <lineage>
        <taxon>Bacteria</taxon>
        <taxon>Pseudomonadati</taxon>
        <taxon>Pseudomonadota</taxon>
        <taxon>Gammaproteobacteria</taxon>
        <taxon>Pseudomonadales</taxon>
        <taxon>Pseudomonadaceae</taxon>
        <taxon>Pseudomonas</taxon>
    </lineage>
</organism>
<comment type="function">
    <text evidence="1">Could be involved in insertion of integral membrane proteins into the membrane.</text>
</comment>
<comment type="subcellular location">
    <subcellularLocation>
        <location evidence="1">Cell inner membrane</location>
        <topology evidence="1">Peripheral membrane protein</topology>
        <orientation evidence="1">Cytoplasmic side</orientation>
    </subcellularLocation>
</comment>
<comment type="similarity">
    <text evidence="1">Belongs to the UPF0161 family.</text>
</comment>